<name>RL14_STRZJ</name>
<reference key="1">
    <citation type="journal article" date="2010" name="Genome Biol.">
        <title>Structure and dynamics of the pan-genome of Streptococcus pneumoniae and closely related species.</title>
        <authorList>
            <person name="Donati C."/>
            <person name="Hiller N.L."/>
            <person name="Tettelin H."/>
            <person name="Muzzi A."/>
            <person name="Croucher N.J."/>
            <person name="Angiuoli S.V."/>
            <person name="Oggioni M."/>
            <person name="Dunning Hotopp J.C."/>
            <person name="Hu F.Z."/>
            <person name="Riley D.R."/>
            <person name="Covacci A."/>
            <person name="Mitchell T.J."/>
            <person name="Bentley S.D."/>
            <person name="Kilian M."/>
            <person name="Ehrlich G.D."/>
            <person name="Rappuoli R."/>
            <person name="Moxon E.R."/>
            <person name="Masignani V."/>
        </authorList>
    </citation>
    <scope>NUCLEOTIDE SEQUENCE [LARGE SCALE GENOMIC DNA]</scope>
    <source>
        <strain>JJA</strain>
    </source>
</reference>
<keyword id="KW-0687">Ribonucleoprotein</keyword>
<keyword id="KW-0689">Ribosomal protein</keyword>
<keyword id="KW-0694">RNA-binding</keyword>
<keyword id="KW-0699">rRNA-binding</keyword>
<comment type="function">
    <text evidence="1">Binds to 23S rRNA. Forms part of two intersubunit bridges in the 70S ribosome.</text>
</comment>
<comment type="subunit">
    <text evidence="1">Part of the 50S ribosomal subunit. Forms a cluster with proteins L3 and L19. In the 70S ribosome, L14 and L19 interact and together make contacts with the 16S rRNA in bridges B5 and B8.</text>
</comment>
<comment type="similarity">
    <text evidence="1">Belongs to the universal ribosomal protein uL14 family.</text>
</comment>
<feature type="chain" id="PRO_1000166942" description="Large ribosomal subunit protein uL14">
    <location>
        <begin position="1"/>
        <end position="122"/>
    </location>
</feature>
<dbReference type="EMBL" id="CP000919">
    <property type="protein sequence ID" value="ACO19253.1"/>
    <property type="molecule type" value="Genomic_DNA"/>
</dbReference>
<dbReference type="RefSeq" id="WP_000616545.1">
    <property type="nucleotide sequence ID" value="NC_012466.1"/>
</dbReference>
<dbReference type="SMR" id="C1CC16"/>
<dbReference type="GeneID" id="93738967"/>
<dbReference type="KEGG" id="sjj:SPJ_0229"/>
<dbReference type="HOGENOM" id="CLU_095071_2_1_9"/>
<dbReference type="Proteomes" id="UP000002206">
    <property type="component" value="Chromosome"/>
</dbReference>
<dbReference type="GO" id="GO:0022625">
    <property type="term" value="C:cytosolic large ribosomal subunit"/>
    <property type="evidence" value="ECO:0007669"/>
    <property type="project" value="TreeGrafter"/>
</dbReference>
<dbReference type="GO" id="GO:0070180">
    <property type="term" value="F:large ribosomal subunit rRNA binding"/>
    <property type="evidence" value="ECO:0007669"/>
    <property type="project" value="TreeGrafter"/>
</dbReference>
<dbReference type="GO" id="GO:0003735">
    <property type="term" value="F:structural constituent of ribosome"/>
    <property type="evidence" value="ECO:0007669"/>
    <property type="project" value="InterPro"/>
</dbReference>
<dbReference type="GO" id="GO:0006412">
    <property type="term" value="P:translation"/>
    <property type="evidence" value="ECO:0007669"/>
    <property type="project" value="UniProtKB-UniRule"/>
</dbReference>
<dbReference type="CDD" id="cd00337">
    <property type="entry name" value="Ribosomal_uL14"/>
    <property type="match status" value="1"/>
</dbReference>
<dbReference type="FunFam" id="2.40.150.20:FF:000001">
    <property type="entry name" value="50S ribosomal protein L14"/>
    <property type="match status" value="1"/>
</dbReference>
<dbReference type="Gene3D" id="2.40.150.20">
    <property type="entry name" value="Ribosomal protein L14"/>
    <property type="match status" value="1"/>
</dbReference>
<dbReference type="HAMAP" id="MF_01367">
    <property type="entry name" value="Ribosomal_uL14"/>
    <property type="match status" value="1"/>
</dbReference>
<dbReference type="InterPro" id="IPR000218">
    <property type="entry name" value="Ribosomal_uL14"/>
</dbReference>
<dbReference type="InterPro" id="IPR005745">
    <property type="entry name" value="Ribosomal_uL14_bac-type"/>
</dbReference>
<dbReference type="InterPro" id="IPR019972">
    <property type="entry name" value="Ribosomal_uL14_CS"/>
</dbReference>
<dbReference type="InterPro" id="IPR036853">
    <property type="entry name" value="Ribosomal_uL14_sf"/>
</dbReference>
<dbReference type="NCBIfam" id="TIGR01067">
    <property type="entry name" value="rplN_bact"/>
    <property type="match status" value="1"/>
</dbReference>
<dbReference type="PANTHER" id="PTHR11761">
    <property type="entry name" value="50S/60S RIBOSOMAL PROTEIN L14/L23"/>
    <property type="match status" value="1"/>
</dbReference>
<dbReference type="PANTHER" id="PTHR11761:SF3">
    <property type="entry name" value="LARGE RIBOSOMAL SUBUNIT PROTEIN UL14M"/>
    <property type="match status" value="1"/>
</dbReference>
<dbReference type="Pfam" id="PF00238">
    <property type="entry name" value="Ribosomal_L14"/>
    <property type="match status" value="1"/>
</dbReference>
<dbReference type="SMART" id="SM01374">
    <property type="entry name" value="Ribosomal_L14"/>
    <property type="match status" value="1"/>
</dbReference>
<dbReference type="SUPFAM" id="SSF50193">
    <property type="entry name" value="Ribosomal protein L14"/>
    <property type="match status" value="1"/>
</dbReference>
<dbReference type="PROSITE" id="PS00049">
    <property type="entry name" value="RIBOSOMAL_L14"/>
    <property type="match status" value="1"/>
</dbReference>
<sequence length="122" mass="13006">MIQTETRLKVADNSGAREILTIKVLGGSGRKFANIGDVIVASVKQATPGGAVKKGDVVKAVIVRTKSGARRADGSYIKFDENAAVIIREDKTPRGTRIFGPVARELREGGFMKIVSLAPEVL</sequence>
<proteinExistence type="inferred from homology"/>
<protein>
    <recommendedName>
        <fullName evidence="1">Large ribosomal subunit protein uL14</fullName>
    </recommendedName>
    <alternativeName>
        <fullName evidence="2">50S ribosomal protein L14</fullName>
    </alternativeName>
</protein>
<accession>C1CC16</accession>
<gene>
    <name evidence="1" type="primary">rplN</name>
    <name type="ordered locus">SPJ_0229</name>
</gene>
<evidence type="ECO:0000255" key="1">
    <source>
        <dbReference type="HAMAP-Rule" id="MF_01367"/>
    </source>
</evidence>
<evidence type="ECO:0000305" key="2"/>
<organism>
    <name type="scientific">Streptococcus pneumoniae (strain JJA)</name>
    <dbReference type="NCBI Taxonomy" id="488222"/>
    <lineage>
        <taxon>Bacteria</taxon>
        <taxon>Bacillati</taxon>
        <taxon>Bacillota</taxon>
        <taxon>Bacilli</taxon>
        <taxon>Lactobacillales</taxon>
        <taxon>Streptococcaceae</taxon>
        <taxon>Streptococcus</taxon>
    </lineage>
</organism>